<accession>B4TEU0</accession>
<reference key="1">
    <citation type="journal article" date="2011" name="J. Bacteriol.">
        <title>Comparative genomics of 28 Salmonella enterica isolates: evidence for CRISPR-mediated adaptive sublineage evolution.</title>
        <authorList>
            <person name="Fricke W.F."/>
            <person name="Mammel M.K."/>
            <person name="McDermott P.F."/>
            <person name="Tartera C."/>
            <person name="White D.G."/>
            <person name="Leclerc J.E."/>
            <person name="Ravel J."/>
            <person name="Cebula T.A."/>
        </authorList>
    </citation>
    <scope>NUCLEOTIDE SEQUENCE [LARGE SCALE GENOMIC DNA]</scope>
    <source>
        <strain>SL476</strain>
    </source>
</reference>
<name>YCEH_SALHS</name>
<feature type="chain" id="PRO_1000201253" description="UPF0502 protein YceH">
    <location>
        <begin position="1"/>
        <end position="215"/>
    </location>
</feature>
<evidence type="ECO:0000255" key="1">
    <source>
        <dbReference type="HAMAP-Rule" id="MF_01584"/>
    </source>
</evidence>
<comment type="similarity">
    <text evidence="1">Belongs to the UPF0502 family.</text>
</comment>
<proteinExistence type="inferred from homology"/>
<gene>
    <name evidence="1" type="primary">yceH</name>
    <name type="ordered locus">SeHA_C1280</name>
</gene>
<dbReference type="EMBL" id="CP001120">
    <property type="protein sequence ID" value="ACF68947.1"/>
    <property type="molecule type" value="Genomic_DNA"/>
</dbReference>
<dbReference type="RefSeq" id="WP_000873048.1">
    <property type="nucleotide sequence ID" value="NC_011083.1"/>
</dbReference>
<dbReference type="SMR" id="B4TEU0"/>
<dbReference type="KEGG" id="seh:SeHA_C1280"/>
<dbReference type="HOGENOM" id="CLU_057831_2_0_6"/>
<dbReference type="Proteomes" id="UP000001866">
    <property type="component" value="Chromosome"/>
</dbReference>
<dbReference type="FunFam" id="1.10.10.10:FF:000196">
    <property type="entry name" value="UPF0502 protein YceH"/>
    <property type="match status" value="1"/>
</dbReference>
<dbReference type="Gene3D" id="1.10.10.10">
    <property type="entry name" value="Winged helix-like DNA-binding domain superfamily/Winged helix DNA-binding domain"/>
    <property type="match status" value="2"/>
</dbReference>
<dbReference type="HAMAP" id="MF_01584">
    <property type="entry name" value="UPF0502"/>
    <property type="match status" value="1"/>
</dbReference>
<dbReference type="InterPro" id="IPR007432">
    <property type="entry name" value="DUF480"/>
</dbReference>
<dbReference type="InterPro" id="IPR036388">
    <property type="entry name" value="WH-like_DNA-bd_sf"/>
</dbReference>
<dbReference type="InterPro" id="IPR036390">
    <property type="entry name" value="WH_DNA-bd_sf"/>
</dbReference>
<dbReference type="NCBIfam" id="NF008413">
    <property type="entry name" value="PRK11239.1"/>
    <property type="match status" value="1"/>
</dbReference>
<dbReference type="PANTHER" id="PTHR38768">
    <property type="entry name" value="UPF0502 PROTEIN YCEH"/>
    <property type="match status" value="1"/>
</dbReference>
<dbReference type="PANTHER" id="PTHR38768:SF1">
    <property type="entry name" value="UPF0502 PROTEIN YCEH"/>
    <property type="match status" value="1"/>
</dbReference>
<dbReference type="Pfam" id="PF04337">
    <property type="entry name" value="DUF480"/>
    <property type="match status" value="1"/>
</dbReference>
<dbReference type="SUPFAM" id="SSF46785">
    <property type="entry name" value="Winged helix' DNA-binding domain"/>
    <property type="match status" value="2"/>
</dbReference>
<organism>
    <name type="scientific">Salmonella heidelberg (strain SL476)</name>
    <dbReference type="NCBI Taxonomy" id="454169"/>
    <lineage>
        <taxon>Bacteria</taxon>
        <taxon>Pseudomonadati</taxon>
        <taxon>Pseudomonadota</taxon>
        <taxon>Gammaproteobacteria</taxon>
        <taxon>Enterobacterales</taxon>
        <taxon>Enterobacteriaceae</taxon>
        <taxon>Salmonella</taxon>
    </lineage>
</organism>
<sequence length="215" mass="24150">MKYELTATEARVIGCLLEKQVTTPEQYPLSVNGVVTACNQKTNREPVMNLTEQEVQEQLDNLVKRHFLRTVSGFGNRVTKYEQRFCNSEFGDLKLSAAEVALVTTLLLRGAQTPGELRSRASRMHEFSDMTEVESTLERLASREDGPYVVRLAREPGKRESRYMHLFCGDVDELSLQTSAPESASGDLQSRVEALESEVAELKQRLDSLLAHLGE</sequence>
<protein>
    <recommendedName>
        <fullName evidence="1">UPF0502 protein YceH</fullName>
    </recommendedName>
</protein>